<keyword id="KW-0010">Activator</keyword>
<keyword id="KW-0238">DNA-binding</keyword>
<keyword id="KW-0539">Nucleus</keyword>
<keyword id="KW-1185">Reference proteome</keyword>
<keyword id="KW-0346">Stress response</keyword>
<keyword id="KW-0804">Transcription</keyword>
<keyword id="KW-0805">Transcription regulation</keyword>
<organism>
    <name type="scientific">Encephalitozoon cuniculi (strain GB-M1)</name>
    <name type="common">Microsporidian parasite</name>
    <dbReference type="NCBI Taxonomy" id="284813"/>
    <lineage>
        <taxon>Eukaryota</taxon>
        <taxon>Fungi</taxon>
        <taxon>Fungi incertae sedis</taxon>
        <taxon>Microsporidia</taxon>
        <taxon>Unikaryonidae</taxon>
        <taxon>Encephalitozoon</taxon>
    </lineage>
</organism>
<evidence type="ECO:0000250" key="1">
    <source>
        <dbReference type="UniProtKB" id="P10961"/>
    </source>
</evidence>
<evidence type="ECO:0000250" key="2">
    <source>
        <dbReference type="UniProtKB" id="P22121"/>
    </source>
</evidence>
<evidence type="ECO:0000256" key="3">
    <source>
        <dbReference type="SAM" id="MobiDB-lite"/>
    </source>
</evidence>
<evidence type="ECO:0000305" key="4"/>
<evidence type="ECO:0000312" key="5">
    <source>
        <dbReference type="EMBL" id="CAD25227.2"/>
    </source>
</evidence>
<dbReference type="EMBL" id="AL590444">
    <property type="protein sequence ID" value="CAD25227.2"/>
    <property type="molecule type" value="Genomic_DNA"/>
</dbReference>
<dbReference type="RefSeq" id="NP_584723.1">
    <property type="nucleotide sequence ID" value="NM_001041073.1"/>
</dbReference>
<dbReference type="SMR" id="Q8SS62"/>
<dbReference type="STRING" id="284813.Q8SS62"/>
<dbReference type="GeneID" id="858871"/>
<dbReference type="KEGG" id="ecu:ECU04_0400"/>
<dbReference type="VEuPathDB" id="MicrosporidiaDB:ECU04_0400"/>
<dbReference type="HOGENOM" id="CLU_030308_8_1_1"/>
<dbReference type="InParanoid" id="Q8SS62"/>
<dbReference type="OrthoDB" id="60033at2759"/>
<dbReference type="Proteomes" id="UP000000819">
    <property type="component" value="Chromosome IV"/>
</dbReference>
<dbReference type="GO" id="GO:0005634">
    <property type="term" value="C:nucleus"/>
    <property type="evidence" value="ECO:0007669"/>
    <property type="project" value="UniProtKB-SubCell"/>
</dbReference>
<dbReference type="GO" id="GO:0003700">
    <property type="term" value="F:DNA-binding transcription factor activity"/>
    <property type="evidence" value="ECO:0007669"/>
    <property type="project" value="InterPro"/>
</dbReference>
<dbReference type="GO" id="GO:0043565">
    <property type="term" value="F:sequence-specific DNA binding"/>
    <property type="evidence" value="ECO:0007669"/>
    <property type="project" value="InterPro"/>
</dbReference>
<dbReference type="Gene3D" id="1.10.10.10">
    <property type="entry name" value="Winged helix-like DNA-binding domain superfamily/Winged helix DNA-binding domain"/>
    <property type="match status" value="1"/>
</dbReference>
<dbReference type="InterPro" id="IPR000232">
    <property type="entry name" value="HSF_DNA-bd"/>
</dbReference>
<dbReference type="InterPro" id="IPR036388">
    <property type="entry name" value="WH-like_DNA-bd_sf"/>
</dbReference>
<dbReference type="InterPro" id="IPR036390">
    <property type="entry name" value="WH_DNA-bd_sf"/>
</dbReference>
<dbReference type="PANTHER" id="PTHR10015">
    <property type="entry name" value="HEAT SHOCK TRANSCRIPTION FACTOR"/>
    <property type="match status" value="1"/>
</dbReference>
<dbReference type="PANTHER" id="PTHR10015:SF206">
    <property type="entry name" value="HSF-TYPE DNA-BINDING DOMAIN-CONTAINING PROTEIN"/>
    <property type="match status" value="1"/>
</dbReference>
<dbReference type="Pfam" id="PF00447">
    <property type="entry name" value="HSF_DNA-bind"/>
    <property type="match status" value="1"/>
</dbReference>
<dbReference type="SMART" id="SM00415">
    <property type="entry name" value="HSF"/>
    <property type="match status" value="1"/>
</dbReference>
<dbReference type="SUPFAM" id="SSF46785">
    <property type="entry name" value="Winged helix' DNA-binding domain"/>
    <property type="match status" value="1"/>
</dbReference>
<feature type="chain" id="PRO_0000388428" description="Heat shock transcription factor">
    <location>
        <begin position="1"/>
        <end position="244"/>
    </location>
</feature>
<feature type="DNA-binding region" evidence="1">
    <location>
        <begin position="13"/>
        <end position="108"/>
    </location>
</feature>
<feature type="region of interest" description="Involved in trimerization" evidence="2">
    <location>
        <begin position="123"/>
        <end position="168"/>
    </location>
</feature>
<feature type="region of interest" description="Disordered" evidence="3">
    <location>
        <begin position="204"/>
        <end position="244"/>
    </location>
</feature>
<feature type="compositionally biased region" description="Basic and acidic residues" evidence="3">
    <location>
        <begin position="231"/>
        <end position="244"/>
    </location>
</feature>
<gene>
    <name evidence="4" type="primary">HSF</name>
    <name evidence="5" type="ordered locus">ECU04_0400</name>
</gene>
<name>HSF_ENCCU</name>
<proteinExistence type="inferred from homology"/>
<reference key="1">
    <citation type="journal article" date="2001" name="Nature">
        <title>Genome sequence and gene compaction of the eukaryote parasite Encephalitozoon cuniculi.</title>
        <authorList>
            <person name="Katinka M.D."/>
            <person name="Duprat S."/>
            <person name="Cornillot E."/>
            <person name="Metenier G."/>
            <person name="Thomarat F."/>
            <person name="Prensier G."/>
            <person name="Barbe V."/>
            <person name="Peyretaillade E."/>
            <person name="Brottier P."/>
            <person name="Wincker P."/>
            <person name="Delbac F."/>
            <person name="El Alaoui H."/>
            <person name="Peyret P."/>
            <person name="Saurin W."/>
            <person name="Gouy M."/>
            <person name="Weissenbach J."/>
            <person name="Vivares C.P."/>
        </authorList>
    </citation>
    <scope>NUCLEOTIDE SEQUENCE [LARGE SCALE GENOMIC DNA]</scope>
    <source>
        <strain>GB-M1</strain>
    </source>
</reference>
<reference key="2">
    <citation type="journal article" date="2009" name="BMC Genomics">
        <title>Identification of transcriptional signals in Encephalitozoon cuniculi widespread among Microsporidia phylum: support for accurate structural genome annotation.</title>
        <authorList>
            <person name="Peyretaillade E."/>
            <person name="Goncalves O."/>
            <person name="Terrat S."/>
            <person name="Dugat-Bony E."/>
            <person name="Wincker P."/>
            <person name="Cornman R.S."/>
            <person name="Evans J.D."/>
            <person name="Delbac F."/>
            <person name="Peyret P."/>
        </authorList>
    </citation>
    <scope>GENOME REANNOTATION</scope>
    <source>
        <strain>GB-M1</strain>
    </source>
</reference>
<sequence>MERSSTSFNFDKIPKFIMKLYKATNNEKYKGICWTPDGLKIHIYDRDVFVKETLPLISKTREFGTFVRMLNSYGFVKSKDIEEEDIYYNKNFRKGREDLLGFDDSLRMIKRKKSSDIRMRIGDGSLKEIVEYLYVQNQELYTELSVCKERIERQERALNGLIEILSRVFRTNSQDLGARIKPSGHNPHNEMDFFLGELSGPLKEGCEPASPPLQDKGIPELSFKPGGIPHADSDTKDDNYDPFF</sequence>
<protein>
    <recommendedName>
        <fullName evidence="5">Heat shock transcription factor</fullName>
        <shortName evidence="4">HSTF</shortName>
    </recommendedName>
    <alternativeName>
        <fullName evidence="4">Heat shock factor protein</fullName>
        <shortName evidence="4">HSF</shortName>
    </alternativeName>
</protein>
<accession>Q8SS62</accession>
<comment type="function">
    <text evidence="1">DNA-binding transcription factor that specifically binds heat shock promoter elements (HSE) and activates transcription.</text>
</comment>
<comment type="subunit">
    <text evidence="1">Homotrimer (By similarity). Homotrimerization increases the affinity of HSF1 to DNA (By similarity).</text>
</comment>
<comment type="subcellular location">
    <subcellularLocation>
        <location evidence="1">Nucleus</location>
    </subcellularLocation>
</comment>
<comment type="similarity">
    <text evidence="4">Belongs to the HSF family.</text>
</comment>